<accession>P44634</accession>
<organism>
    <name type="scientific">Haemophilus influenzae (strain ATCC 51907 / DSM 11121 / KW20 / Rd)</name>
    <dbReference type="NCBI Taxonomy" id="71421"/>
    <lineage>
        <taxon>Bacteria</taxon>
        <taxon>Pseudomonadati</taxon>
        <taxon>Pseudomonadota</taxon>
        <taxon>Gammaproteobacteria</taxon>
        <taxon>Pasteurellales</taxon>
        <taxon>Pasteurellaceae</taxon>
        <taxon>Haemophilus</taxon>
    </lineage>
</organism>
<name>Y315_HAEIN</name>
<comment type="subcellular location">
    <subcellularLocation>
        <location evidence="1">Cytoplasm</location>
    </subcellularLocation>
</comment>
<comment type="similarity">
    <text evidence="1">Belongs to the TACO1 family.</text>
</comment>
<feature type="chain" id="PRO_0000175818" description="Probable transcriptional regulatory protein HI_0315">
    <location>
        <begin position="1"/>
        <end position="246"/>
    </location>
</feature>
<sequence>MAGHSKWANIKHRKAAQDAQRGKIFTKLIRELVTAAKIGGGDVSANPRLRAAVDKALSNNMTRDTINRAIDRGVGGGDDTNMETKIYEGYGPGGTAVMVECLSDNANRTISQVRPSFTKCGGNLGTEGSVGYLFSKKGLILIAEADEDALTEAAIEAGADDIQPQDDGSFEIYTAWEDLGSVRDGIEAAGFKVQEAEVTMIPSTTVDLDIETAPKLLRLIDMLEDCDDVQNVYHNGEICDEVASQL</sequence>
<dbReference type="EMBL" id="L42023">
    <property type="protein sequence ID" value="AAC21979.1"/>
    <property type="molecule type" value="Genomic_DNA"/>
</dbReference>
<dbReference type="PIR" id="G64147">
    <property type="entry name" value="G64147"/>
</dbReference>
<dbReference type="RefSeq" id="NP_438481.1">
    <property type="nucleotide sequence ID" value="NC_000907.1"/>
</dbReference>
<dbReference type="SMR" id="P44634"/>
<dbReference type="STRING" id="71421.HI_0315"/>
<dbReference type="EnsemblBacteria" id="AAC21979">
    <property type="protein sequence ID" value="AAC21979"/>
    <property type="gene ID" value="HI_0315"/>
</dbReference>
<dbReference type="KEGG" id="hin:HI_0315"/>
<dbReference type="PATRIC" id="fig|71421.8.peg.332"/>
<dbReference type="eggNOG" id="COG0217">
    <property type="taxonomic scope" value="Bacteria"/>
</dbReference>
<dbReference type="HOGENOM" id="CLU_062974_2_2_6"/>
<dbReference type="OrthoDB" id="9781053at2"/>
<dbReference type="PhylomeDB" id="P44634"/>
<dbReference type="BioCyc" id="HINF71421:G1GJ1-332-MONOMER"/>
<dbReference type="Proteomes" id="UP000000579">
    <property type="component" value="Chromosome"/>
</dbReference>
<dbReference type="GO" id="GO:0005829">
    <property type="term" value="C:cytosol"/>
    <property type="evidence" value="ECO:0000318"/>
    <property type="project" value="GO_Central"/>
</dbReference>
<dbReference type="GO" id="GO:0003677">
    <property type="term" value="F:DNA binding"/>
    <property type="evidence" value="ECO:0007669"/>
    <property type="project" value="UniProtKB-UniRule"/>
</dbReference>
<dbReference type="GO" id="GO:0006355">
    <property type="term" value="P:regulation of DNA-templated transcription"/>
    <property type="evidence" value="ECO:0007669"/>
    <property type="project" value="UniProtKB-UniRule"/>
</dbReference>
<dbReference type="FunFam" id="1.10.10.200:FF:000001">
    <property type="entry name" value="Probable transcriptional regulatory protein YebC"/>
    <property type="match status" value="1"/>
</dbReference>
<dbReference type="FunFam" id="3.30.70.980:FF:000002">
    <property type="entry name" value="Probable transcriptional regulatory protein YebC"/>
    <property type="match status" value="1"/>
</dbReference>
<dbReference type="Gene3D" id="1.10.10.200">
    <property type="match status" value="1"/>
</dbReference>
<dbReference type="Gene3D" id="3.30.70.980">
    <property type="match status" value="2"/>
</dbReference>
<dbReference type="HAMAP" id="MF_00693">
    <property type="entry name" value="Transcrip_reg_TACO1"/>
    <property type="match status" value="1"/>
</dbReference>
<dbReference type="InterPro" id="IPR017856">
    <property type="entry name" value="Integrase-like_N"/>
</dbReference>
<dbReference type="InterPro" id="IPR048300">
    <property type="entry name" value="TACO1_YebC-like_2nd/3rd_dom"/>
</dbReference>
<dbReference type="InterPro" id="IPR049083">
    <property type="entry name" value="TACO1_YebC_N"/>
</dbReference>
<dbReference type="InterPro" id="IPR002876">
    <property type="entry name" value="Transcrip_reg_TACO1-like"/>
</dbReference>
<dbReference type="InterPro" id="IPR026564">
    <property type="entry name" value="Transcrip_reg_TACO1-like_dom3"/>
</dbReference>
<dbReference type="InterPro" id="IPR029072">
    <property type="entry name" value="YebC-like"/>
</dbReference>
<dbReference type="NCBIfam" id="NF001030">
    <property type="entry name" value="PRK00110.1"/>
    <property type="match status" value="1"/>
</dbReference>
<dbReference type="NCBIfam" id="NF009044">
    <property type="entry name" value="PRK12378.1"/>
    <property type="match status" value="1"/>
</dbReference>
<dbReference type="NCBIfam" id="TIGR01033">
    <property type="entry name" value="YebC/PmpR family DNA-binding transcriptional regulator"/>
    <property type="match status" value="1"/>
</dbReference>
<dbReference type="PANTHER" id="PTHR12532:SF6">
    <property type="entry name" value="TRANSCRIPTIONAL REGULATORY PROTEIN YEBC-RELATED"/>
    <property type="match status" value="1"/>
</dbReference>
<dbReference type="PANTHER" id="PTHR12532">
    <property type="entry name" value="TRANSLATIONAL ACTIVATOR OF CYTOCHROME C OXIDASE 1"/>
    <property type="match status" value="1"/>
</dbReference>
<dbReference type="Pfam" id="PF20772">
    <property type="entry name" value="TACO1_YebC_N"/>
    <property type="match status" value="1"/>
</dbReference>
<dbReference type="Pfam" id="PF01709">
    <property type="entry name" value="Transcrip_reg"/>
    <property type="match status" value="1"/>
</dbReference>
<dbReference type="SUPFAM" id="SSF75625">
    <property type="entry name" value="YebC-like"/>
    <property type="match status" value="1"/>
</dbReference>
<gene>
    <name type="ordered locus">HI_0315</name>
</gene>
<protein>
    <recommendedName>
        <fullName evidence="1">Probable transcriptional regulatory protein HI_0315</fullName>
    </recommendedName>
</protein>
<proteinExistence type="evidence at protein level"/>
<reference key="1">
    <citation type="journal article" date="1995" name="Science">
        <title>Whole-genome random sequencing and assembly of Haemophilus influenzae Rd.</title>
        <authorList>
            <person name="Fleischmann R.D."/>
            <person name="Adams M.D."/>
            <person name="White O."/>
            <person name="Clayton R.A."/>
            <person name="Kirkness E.F."/>
            <person name="Kerlavage A.R."/>
            <person name="Bult C.J."/>
            <person name="Tomb J.-F."/>
            <person name="Dougherty B.A."/>
            <person name="Merrick J.M."/>
            <person name="McKenney K."/>
            <person name="Sutton G.G."/>
            <person name="FitzHugh W."/>
            <person name="Fields C.A."/>
            <person name="Gocayne J.D."/>
            <person name="Scott J.D."/>
            <person name="Shirley R."/>
            <person name="Liu L.-I."/>
            <person name="Glodek A."/>
            <person name="Kelley J.M."/>
            <person name="Weidman J.F."/>
            <person name="Phillips C.A."/>
            <person name="Spriggs T."/>
            <person name="Hedblom E."/>
            <person name="Cotton M.D."/>
            <person name="Utterback T.R."/>
            <person name="Hanna M.C."/>
            <person name="Nguyen D.T."/>
            <person name="Saudek D.M."/>
            <person name="Brandon R.C."/>
            <person name="Fine L.D."/>
            <person name="Fritchman J.L."/>
            <person name="Fuhrmann J.L."/>
            <person name="Geoghagen N.S.M."/>
            <person name="Gnehm C.L."/>
            <person name="McDonald L.A."/>
            <person name="Small K.V."/>
            <person name="Fraser C.M."/>
            <person name="Smith H.O."/>
            <person name="Venter J.C."/>
        </authorList>
    </citation>
    <scope>NUCLEOTIDE SEQUENCE [LARGE SCALE GENOMIC DNA]</scope>
    <source>
        <strain>ATCC 51907 / DSM 11121 / KW20 / Rd</strain>
    </source>
</reference>
<reference key="2">
    <citation type="journal article" date="2000" name="Electrophoresis">
        <title>Two-dimensional map of the proteome of Haemophilus influenzae.</title>
        <authorList>
            <person name="Langen H."/>
            <person name="Takacs B."/>
            <person name="Evers S."/>
            <person name="Berndt P."/>
            <person name="Lahm H.W."/>
            <person name="Wipf B."/>
            <person name="Gray C."/>
            <person name="Fountoulakis M."/>
        </authorList>
    </citation>
    <scope>IDENTIFICATION BY MASS SPECTROMETRY</scope>
    <source>
        <strain>ATCC 51907 / DSM 11121 / KW20 / Rd</strain>
    </source>
</reference>
<keyword id="KW-0963">Cytoplasm</keyword>
<keyword id="KW-0238">DNA-binding</keyword>
<keyword id="KW-1185">Reference proteome</keyword>
<keyword id="KW-0804">Transcription</keyword>
<keyword id="KW-0805">Transcription regulation</keyword>
<evidence type="ECO:0000255" key="1">
    <source>
        <dbReference type="HAMAP-Rule" id="MF_00693"/>
    </source>
</evidence>